<gene>
    <name evidence="1" type="primary">L2</name>
</gene>
<evidence type="ECO:0000255" key="1">
    <source>
        <dbReference type="HAMAP-Rule" id="MF_04003"/>
    </source>
</evidence>
<accession>Q9IR53</accession>
<proteinExistence type="inferred from homology"/>
<feature type="chain" id="PRO_0000133634" description="Minor capsid protein L2">
    <location>
        <begin position="1"/>
        <end position="459"/>
    </location>
</feature>
<feature type="short sequence motif" description="Nuclear localization signal" evidence="1">
    <location>
        <begin position="1"/>
        <end position="12"/>
    </location>
</feature>
<feature type="short sequence motif" description="Nuclear localization signal" evidence="1">
    <location>
        <begin position="454"/>
        <end position="458"/>
    </location>
</feature>
<feature type="disulfide bond" evidence="1">
    <location>
        <begin position="21"/>
        <end position="27"/>
    </location>
</feature>
<dbReference type="EMBL" id="AB027021">
    <property type="protein sequence ID" value="BAA90741.1"/>
    <property type="molecule type" value="Genomic_DNA"/>
</dbReference>
<dbReference type="Proteomes" id="UP000145193">
    <property type="component" value="Genome"/>
</dbReference>
<dbReference type="GO" id="GO:0043657">
    <property type="term" value="C:host cell"/>
    <property type="evidence" value="ECO:0007669"/>
    <property type="project" value="GOC"/>
</dbReference>
<dbReference type="GO" id="GO:0044174">
    <property type="term" value="C:host cell endosome"/>
    <property type="evidence" value="ECO:0007669"/>
    <property type="project" value="UniProtKB-KW"/>
</dbReference>
<dbReference type="GO" id="GO:0044177">
    <property type="term" value="C:host cell Golgi apparatus"/>
    <property type="evidence" value="ECO:0007669"/>
    <property type="project" value="UniProtKB-SubCell"/>
</dbReference>
<dbReference type="GO" id="GO:0042025">
    <property type="term" value="C:host cell nucleus"/>
    <property type="evidence" value="ECO:0007669"/>
    <property type="project" value="UniProtKB-SubCell"/>
</dbReference>
<dbReference type="GO" id="GO:0019028">
    <property type="term" value="C:viral capsid"/>
    <property type="evidence" value="ECO:0007669"/>
    <property type="project" value="UniProtKB-UniRule"/>
</dbReference>
<dbReference type="GO" id="GO:0003677">
    <property type="term" value="F:DNA binding"/>
    <property type="evidence" value="ECO:0007669"/>
    <property type="project" value="UniProtKB-UniRule"/>
</dbReference>
<dbReference type="GO" id="GO:0005198">
    <property type="term" value="F:structural molecule activity"/>
    <property type="evidence" value="ECO:0007669"/>
    <property type="project" value="UniProtKB-UniRule"/>
</dbReference>
<dbReference type="GO" id="GO:0075521">
    <property type="term" value="P:microtubule-dependent intracellular transport of viral material towards nucleus"/>
    <property type="evidence" value="ECO:0007669"/>
    <property type="project" value="UniProtKB-UniRule"/>
</dbReference>
<dbReference type="GO" id="GO:0046718">
    <property type="term" value="P:symbiont entry into host cell"/>
    <property type="evidence" value="ECO:0007669"/>
    <property type="project" value="UniProtKB-KW"/>
</dbReference>
<dbReference type="GO" id="GO:0075732">
    <property type="term" value="P:viral penetration into host nucleus"/>
    <property type="evidence" value="ECO:0007669"/>
    <property type="project" value="UniProtKB-KW"/>
</dbReference>
<dbReference type="HAMAP" id="MF_04003">
    <property type="entry name" value="PPV_L2"/>
    <property type="match status" value="1"/>
</dbReference>
<dbReference type="InterPro" id="IPR000784">
    <property type="entry name" value="Late_L2"/>
</dbReference>
<dbReference type="Pfam" id="PF00513">
    <property type="entry name" value="Late_protein_L2"/>
    <property type="match status" value="1"/>
</dbReference>
<keyword id="KW-0167">Capsid protein</keyword>
<keyword id="KW-1176">Cytoplasmic inwards viral transport</keyword>
<keyword id="KW-1015">Disulfide bond</keyword>
<keyword id="KW-0238">DNA-binding</keyword>
<keyword id="KW-1039">Host endosome</keyword>
<keyword id="KW-1040">Host Golgi apparatus</keyword>
<keyword id="KW-1048">Host nucleus</keyword>
<keyword id="KW-0945">Host-virus interaction</keyword>
<keyword id="KW-0426">Late protein</keyword>
<keyword id="KW-1177">Microtubular inwards viral transport</keyword>
<keyword id="KW-0597">Phosphoprotein</keyword>
<keyword id="KW-1163">Viral penetration into host nucleus</keyword>
<keyword id="KW-0946">Virion</keyword>
<keyword id="KW-1160">Virus entry into host cell</keyword>
<organism>
    <name type="scientific">Human papillomavirus 82</name>
    <dbReference type="NCBI Taxonomy" id="129724"/>
    <lineage>
        <taxon>Viruses</taxon>
        <taxon>Monodnaviria</taxon>
        <taxon>Shotokuvirae</taxon>
        <taxon>Cossaviricota</taxon>
        <taxon>Papovaviricetes</taxon>
        <taxon>Zurhausenvirales</taxon>
        <taxon>Papillomaviridae</taxon>
        <taxon>Firstpapillomavirinae</taxon>
        <taxon>Alphapapillomavirus</taxon>
        <taxon>Alphapapillomavirus 5</taxon>
    </lineage>
</organism>
<comment type="function">
    <text evidence="1">Minor protein of the capsid that localizes along the inner surface of the virion, within the central cavities beneath the L1 pentamers. Plays a role in capsid stabilization through interaction with the major capsid protein L1. Once the virion enters the host cell, L2 escorts the genomic DNA into the nucleus by promoting escape from the endosomal compartments and traffic through the host Golgi network. Mechanistically, the C-terminus of L2 possesses a cell-penetrating peptide that protudes from the host endosome, interacts with host cytoplasmic retromer cargo and thereby mediates the capsid delivery to the host trans-Golgi network. Plays a role through its interaction with host dynein in the intracellular microtubule-dependent transport of viral capsid toward the nucleus. Mediates the viral genome import into the nucleus through binding to host importins. Once within the nucleus, L2 localizes viral genomes to host PML bodies in order to activate early gene expression for establishment of infection. Later on, promotes late gene expression by interacting with the viral E2 protein and by inhibiting its transcriptional activation functions. During virion assembly, encapsidates the genome by direct interaction with the viral DNA.</text>
</comment>
<comment type="subunit">
    <text evidence="1">Interacts with major capsid protein L1. Interacts with E2; this interaction inhibits E2 transcriptional activity but not the DNA replication function E2. Interacts with host GADD45GIP1. Interacts with host HSPA8; this interaction is required for L2 nuclear translocation. Interacts with host importins KPNB2 and KPNB3. Forms a complex with importin alpha2-beta1 heterodimers via interaction with the importin alpha2 adapter. Interacts with host DYNLT1; this interaction is essential for virus intracellular transport during entry. Interacts (via C-terminus) with host retromer subunits VPS35 and VPS29.</text>
</comment>
<comment type="subcellular location">
    <subcellularLocation>
        <location evidence="1">Virion</location>
    </subcellularLocation>
    <subcellularLocation>
        <location evidence="1">Host nucleus</location>
    </subcellularLocation>
    <subcellularLocation>
        <location evidence="1">Host early endosome</location>
    </subcellularLocation>
    <subcellularLocation>
        <location evidence="1">Host Golgi apparatus</location>
    </subcellularLocation>
</comment>
<comment type="PTM">
    <text evidence="1">Highly phosphorylated.</text>
</comment>
<comment type="similarity">
    <text evidence="1">Belongs to the papillomaviridae L2 protein family.</text>
</comment>
<name>VL2_HPV82</name>
<organismHost>
    <name type="scientific">Homo sapiens</name>
    <name type="common">Human</name>
    <dbReference type="NCBI Taxonomy" id="9606"/>
</organismHost>
<reference key="1">
    <citation type="journal article" date="2000" name="Clin. Diagn. Lab. Immunol.">
        <title>Molecular cloning and nucleotide sequence analysis of a novel human papillomavirus (type 82) associated with vaginal intraepithelial neoplasia.</title>
        <authorList>
            <person name="Kino N."/>
            <person name="Sata T."/>
            <person name="Sato Y."/>
            <person name="Sugase M."/>
            <person name="Matsukura T."/>
        </authorList>
    </citation>
    <scope>NUCLEOTIDE SEQUENCE [GENOMIC DNA]</scope>
</reference>
<sequence>MVAARARRRKRASVTQLYSTCKAAGTCPPDVIPKVKGTTLADKILQWSGLGIFLGGLGIGTGSGTGGRTGYIPLGGGGRPGVVDIAPARPPIIIEPVAPTEPSIVNLVEDSSIINSGSTIPTFTGTDGFEITSSSTTTPAVLDITPSAGTVHVTSTNIENPLYIEPPFIEAPQSGEVSGHIFTSTPTSGTHGYEEIPMEVFASNVTTGKEPISSTPTPGVRRIAAPRLYSRAFSQVKVTNPDFISKPSTFVTFDNPAFEPADTSLSFEEPTDVAPDPDFLDIIKLHRPALTSRRGTVRFSRLGQKATIRTRSGKQIGARGHYYHDISSIAPAEELEMQPLLSPSTNNYSYDIYADLNEAETGFMQPTQTTPMLRSPFSPLSTQLPSLSSSVSSSYANVTIPFSTTYNVPIHTGPDVVLPTSPTVWPFIPHTSIDTQHAIVIQGGDYYFVAVYIFVTQTP</sequence>
<protein>
    <recommendedName>
        <fullName evidence="1">Minor capsid protein L2</fullName>
    </recommendedName>
</protein>